<name>UREG_CUPMC</name>
<evidence type="ECO:0000255" key="1">
    <source>
        <dbReference type="HAMAP-Rule" id="MF_01389"/>
    </source>
</evidence>
<gene>
    <name evidence="1" type="primary">ureG</name>
    <name type="ordered locus">Rmet_0964</name>
</gene>
<proteinExistence type="inferred from homology"/>
<reference key="1">
    <citation type="journal article" date="2010" name="PLoS ONE">
        <title>The complete genome sequence of Cupriavidus metallidurans strain CH34, a master survivalist in harsh and anthropogenic environments.</title>
        <authorList>
            <person name="Janssen P.J."/>
            <person name="Van Houdt R."/>
            <person name="Moors H."/>
            <person name="Monsieurs P."/>
            <person name="Morin N."/>
            <person name="Michaux A."/>
            <person name="Benotmane M.A."/>
            <person name="Leys N."/>
            <person name="Vallaeys T."/>
            <person name="Lapidus A."/>
            <person name="Monchy S."/>
            <person name="Medigue C."/>
            <person name="Taghavi S."/>
            <person name="McCorkle S."/>
            <person name="Dunn J."/>
            <person name="van der Lelie D."/>
            <person name="Mergeay M."/>
        </authorList>
    </citation>
    <scope>NUCLEOTIDE SEQUENCE [LARGE SCALE GENOMIC DNA]</scope>
    <source>
        <strain>ATCC 43123 / DSM 2839 / NBRC 102507 / CH34</strain>
    </source>
</reference>
<accession>Q1LPS6</accession>
<protein>
    <recommendedName>
        <fullName evidence="1">Urease accessory protein UreG</fullName>
    </recommendedName>
</protein>
<comment type="function">
    <text evidence="1">Facilitates the functional incorporation of the urease nickel metallocenter. This process requires GTP hydrolysis, probably effectuated by UreG.</text>
</comment>
<comment type="subunit">
    <text evidence="1">Homodimer. UreD, UreF and UreG form a complex that acts as a GTP-hydrolysis-dependent molecular chaperone, activating the urease apoprotein by helping to assemble the nickel containing metallocenter of UreC. The UreE protein probably delivers the nickel.</text>
</comment>
<comment type="subcellular location">
    <subcellularLocation>
        <location evidence="1">Cytoplasm</location>
    </subcellularLocation>
</comment>
<comment type="similarity">
    <text evidence="1">Belongs to the SIMIBI class G3E GTPase family. UreG subfamily.</text>
</comment>
<organism>
    <name type="scientific">Cupriavidus metallidurans (strain ATCC 43123 / DSM 2839 / NBRC 102507 / CH34)</name>
    <name type="common">Ralstonia metallidurans</name>
    <dbReference type="NCBI Taxonomy" id="266264"/>
    <lineage>
        <taxon>Bacteria</taxon>
        <taxon>Pseudomonadati</taxon>
        <taxon>Pseudomonadota</taxon>
        <taxon>Betaproteobacteria</taxon>
        <taxon>Burkholderiales</taxon>
        <taxon>Burkholderiaceae</taxon>
        <taxon>Cupriavidus</taxon>
    </lineage>
</organism>
<feature type="chain" id="PRO_0000347434" description="Urease accessory protein UreG">
    <location>
        <begin position="1"/>
        <end position="207"/>
    </location>
</feature>
<feature type="binding site" evidence="1">
    <location>
        <begin position="16"/>
        <end position="23"/>
    </location>
    <ligand>
        <name>GTP</name>
        <dbReference type="ChEBI" id="CHEBI:37565"/>
    </ligand>
</feature>
<sequence>MTRTKKNPPLRVGVGGPVGSGKTTLLEMLCKAMRDRYDLVAITNDIYTKEDQRLLTISGALPAERIMGVETGGCPHTAIREDASINLEAVDRMLAKFPDADVVFIESGGDNLAATFSPELSDLTIYVIDVAGGEKIPRKGGPGITKSDLLVINKTDLAPYVGASLEIMESDARKMRGERPFVMGSVKSGQGLDQVIAFIERQGMLDV</sequence>
<keyword id="KW-0143">Chaperone</keyword>
<keyword id="KW-0963">Cytoplasm</keyword>
<keyword id="KW-0342">GTP-binding</keyword>
<keyword id="KW-0996">Nickel insertion</keyword>
<keyword id="KW-0547">Nucleotide-binding</keyword>
<keyword id="KW-1185">Reference proteome</keyword>
<dbReference type="EMBL" id="CP000352">
    <property type="protein sequence ID" value="ABF07850.1"/>
    <property type="molecule type" value="Genomic_DNA"/>
</dbReference>
<dbReference type="RefSeq" id="WP_008643417.1">
    <property type="nucleotide sequence ID" value="NC_007973.1"/>
</dbReference>
<dbReference type="SMR" id="Q1LPS6"/>
<dbReference type="STRING" id="266264.Rmet_0964"/>
<dbReference type="KEGG" id="rme:Rmet_0964"/>
<dbReference type="eggNOG" id="COG0378">
    <property type="taxonomic scope" value="Bacteria"/>
</dbReference>
<dbReference type="HOGENOM" id="CLU_072144_1_0_4"/>
<dbReference type="Proteomes" id="UP000002429">
    <property type="component" value="Chromosome"/>
</dbReference>
<dbReference type="GO" id="GO:0005737">
    <property type="term" value="C:cytoplasm"/>
    <property type="evidence" value="ECO:0007669"/>
    <property type="project" value="UniProtKB-SubCell"/>
</dbReference>
<dbReference type="GO" id="GO:0005525">
    <property type="term" value="F:GTP binding"/>
    <property type="evidence" value="ECO:0007669"/>
    <property type="project" value="UniProtKB-KW"/>
</dbReference>
<dbReference type="GO" id="GO:0003924">
    <property type="term" value="F:GTPase activity"/>
    <property type="evidence" value="ECO:0007669"/>
    <property type="project" value="InterPro"/>
</dbReference>
<dbReference type="GO" id="GO:0016151">
    <property type="term" value="F:nickel cation binding"/>
    <property type="evidence" value="ECO:0007669"/>
    <property type="project" value="UniProtKB-UniRule"/>
</dbReference>
<dbReference type="GO" id="GO:0043419">
    <property type="term" value="P:urea catabolic process"/>
    <property type="evidence" value="ECO:0007669"/>
    <property type="project" value="InterPro"/>
</dbReference>
<dbReference type="CDD" id="cd05540">
    <property type="entry name" value="UreG"/>
    <property type="match status" value="1"/>
</dbReference>
<dbReference type="FunFam" id="3.40.50.300:FF:000208">
    <property type="entry name" value="Urease accessory protein UreG"/>
    <property type="match status" value="1"/>
</dbReference>
<dbReference type="Gene3D" id="3.40.50.300">
    <property type="entry name" value="P-loop containing nucleotide triphosphate hydrolases"/>
    <property type="match status" value="1"/>
</dbReference>
<dbReference type="HAMAP" id="MF_01389">
    <property type="entry name" value="UreG"/>
    <property type="match status" value="1"/>
</dbReference>
<dbReference type="InterPro" id="IPR003495">
    <property type="entry name" value="CobW/HypB/UreG_nucleotide-bd"/>
</dbReference>
<dbReference type="InterPro" id="IPR027417">
    <property type="entry name" value="P-loop_NTPase"/>
</dbReference>
<dbReference type="InterPro" id="IPR004400">
    <property type="entry name" value="UreG"/>
</dbReference>
<dbReference type="NCBIfam" id="TIGR00101">
    <property type="entry name" value="ureG"/>
    <property type="match status" value="1"/>
</dbReference>
<dbReference type="PANTHER" id="PTHR31715">
    <property type="entry name" value="UREASE ACCESSORY PROTEIN G"/>
    <property type="match status" value="1"/>
</dbReference>
<dbReference type="PANTHER" id="PTHR31715:SF0">
    <property type="entry name" value="UREASE ACCESSORY PROTEIN G"/>
    <property type="match status" value="1"/>
</dbReference>
<dbReference type="Pfam" id="PF02492">
    <property type="entry name" value="cobW"/>
    <property type="match status" value="1"/>
</dbReference>
<dbReference type="PIRSF" id="PIRSF005624">
    <property type="entry name" value="Ni-bind_GTPase"/>
    <property type="match status" value="1"/>
</dbReference>
<dbReference type="SUPFAM" id="SSF52540">
    <property type="entry name" value="P-loop containing nucleoside triphosphate hydrolases"/>
    <property type="match status" value="1"/>
</dbReference>